<keyword id="KW-0031">Aminopeptidase</keyword>
<keyword id="KW-0963">Cytoplasm</keyword>
<keyword id="KW-0378">Hydrolase</keyword>
<keyword id="KW-0479">Metal-binding</keyword>
<keyword id="KW-0645">Protease</keyword>
<keyword id="KW-1185">Reference proteome</keyword>
<keyword id="KW-0862">Zinc</keyword>
<keyword id="KW-0863">Zinc-finger</keyword>
<reference key="1">
    <citation type="submission" date="2004-05" db="EMBL/GenBank/DDBJ databases">
        <authorList>
            <consortium name="NIH - Xenopus Gene Collection (XGC) project"/>
        </authorList>
    </citation>
    <scope>NUCLEOTIDE SEQUENCE [LARGE SCALE MRNA]</scope>
    <source>
        <tissue>Embryo</tissue>
    </source>
</reference>
<dbReference type="EC" id="3.4.11.18" evidence="1"/>
<dbReference type="EMBL" id="BC046685">
    <property type="protein sequence ID" value="AAH46685.1"/>
    <property type="status" value="ALT_INIT"/>
    <property type="molecule type" value="mRNA"/>
</dbReference>
<dbReference type="EMBL" id="BC070567">
    <property type="protein sequence ID" value="AAH70567.1"/>
    <property type="molecule type" value="mRNA"/>
</dbReference>
<dbReference type="SMR" id="Q7ZWV9"/>
<dbReference type="MEROPS" id="M24.017"/>
<dbReference type="DNASU" id="399247"/>
<dbReference type="GeneID" id="399247"/>
<dbReference type="KEGG" id="xla:399247"/>
<dbReference type="AGR" id="Xenbase:XB-GENE-6254194"/>
<dbReference type="CTD" id="399247"/>
<dbReference type="Xenbase" id="XB-GENE-6254194">
    <property type="gene designation" value="metap1.L"/>
</dbReference>
<dbReference type="OMA" id="FYGDHAY"/>
<dbReference type="OrthoDB" id="3209743at2759"/>
<dbReference type="Proteomes" id="UP000186698">
    <property type="component" value="Chromosome 1L"/>
</dbReference>
<dbReference type="Bgee" id="399247">
    <property type="expression patterns" value="Expressed in blastula and 19 other cell types or tissues"/>
</dbReference>
<dbReference type="GO" id="GO:0005829">
    <property type="term" value="C:cytosol"/>
    <property type="evidence" value="ECO:0000318"/>
    <property type="project" value="GO_Central"/>
</dbReference>
<dbReference type="GO" id="GO:0022626">
    <property type="term" value="C:cytosolic ribosome"/>
    <property type="evidence" value="ECO:0007669"/>
    <property type="project" value="UniProtKB-UniRule"/>
</dbReference>
<dbReference type="GO" id="GO:0004239">
    <property type="term" value="F:initiator methionyl aminopeptidase activity"/>
    <property type="evidence" value="ECO:0007669"/>
    <property type="project" value="UniProtKB-UniRule"/>
</dbReference>
<dbReference type="GO" id="GO:0070006">
    <property type="term" value="F:metalloaminopeptidase activity"/>
    <property type="evidence" value="ECO:0000318"/>
    <property type="project" value="GO_Central"/>
</dbReference>
<dbReference type="GO" id="GO:0008270">
    <property type="term" value="F:zinc ion binding"/>
    <property type="evidence" value="ECO:0007669"/>
    <property type="project" value="UniProtKB-KW"/>
</dbReference>
<dbReference type="GO" id="GO:0006508">
    <property type="term" value="P:proteolysis"/>
    <property type="evidence" value="ECO:0007669"/>
    <property type="project" value="UniProtKB-KW"/>
</dbReference>
<dbReference type="CDD" id="cd01086">
    <property type="entry name" value="MetAP1"/>
    <property type="match status" value="1"/>
</dbReference>
<dbReference type="FunFam" id="3.90.230.10:FF:000010">
    <property type="entry name" value="Methionine aminopeptidase"/>
    <property type="match status" value="1"/>
</dbReference>
<dbReference type="Gene3D" id="3.90.230.10">
    <property type="entry name" value="Creatinase/methionine aminopeptidase superfamily"/>
    <property type="match status" value="1"/>
</dbReference>
<dbReference type="HAMAP" id="MF_01974">
    <property type="entry name" value="MetAP_1"/>
    <property type="match status" value="1"/>
</dbReference>
<dbReference type="InterPro" id="IPR036005">
    <property type="entry name" value="Creatinase/aminopeptidase-like"/>
</dbReference>
<dbReference type="InterPro" id="IPR000994">
    <property type="entry name" value="Pept_M24"/>
</dbReference>
<dbReference type="InterPro" id="IPR001714">
    <property type="entry name" value="Pept_M24_MAP"/>
</dbReference>
<dbReference type="InterPro" id="IPR002467">
    <property type="entry name" value="Pept_M24A_MAP1"/>
</dbReference>
<dbReference type="InterPro" id="IPR031615">
    <property type="entry name" value="Zfn-C6H2"/>
</dbReference>
<dbReference type="NCBIfam" id="TIGR00500">
    <property type="entry name" value="met_pdase_I"/>
    <property type="match status" value="1"/>
</dbReference>
<dbReference type="PANTHER" id="PTHR43330">
    <property type="entry name" value="METHIONINE AMINOPEPTIDASE"/>
    <property type="match status" value="1"/>
</dbReference>
<dbReference type="PANTHER" id="PTHR43330:SF7">
    <property type="entry name" value="METHIONINE AMINOPEPTIDASE 1"/>
    <property type="match status" value="1"/>
</dbReference>
<dbReference type="Pfam" id="PF00557">
    <property type="entry name" value="Peptidase_M24"/>
    <property type="match status" value="1"/>
</dbReference>
<dbReference type="Pfam" id="PF15801">
    <property type="entry name" value="zf-C6H2"/>
    <property type="match status" value="1"/>
</dbReference>
<dbReference type="PRINTS" id="PR00599">
    <property type="entry name" value="MAPEPTIDASE"/>
</dbReference>
<dbReference type="SUPFAM" id="SSF55920">
    <property type="entry name" value="Creatinase/aminopeptidase"/>
    <property type="match status" value="1"/>
</dbReference>
<dbReference type="PROSITE" id="PS00680">
    <property type="entry name" value="MAP_1"/>
    <property type="match status" value="1"/>
</dbReference>
<dbReference type="PROSITE" id="PS52013">
    <property type="entry name" value="ZF_C6H2"/>
    <property type="match status" value="1"/>
</dbReference>
<sequence>MAAVESRVCETEGCSSEAKLQCPTCIKLGIQGSYFCSQECFKGSWATHKLLHKKAKDDKIKPEVSPWTMDGEVNTDPWPGYRYTGKLRPHYPLTPMRPVPSYIQRPDYADHPLGMSESEQTLKGTSQIKTLSPEDIEGMRVVCRLAREVLGVAAMMVKSGITTEEIDHAVHLACISRNCYPSPLNYYNFPKSCCTSVNEVICHGIPDRRPLQDGDIVNVDITVYRDGYHGDLNETFYVGDVDEGAKRLVETTYECLMQAIDEVKPGVRYRELGNIIQKHAQANGFSIVRSYCGHGIHKLFHTAPNVPHYGKNKAVGVMKPGHVFTIEPMICEGGWQDETWPDGWTAITRDGKRSAQFEHTLLVTETGCEILTCRLEENGRPYFIS</sequence>
<feature type="chain" id="PRO_0000323738" description="Methionine aminopeptidase 1">
    <location>
        <begin position="1"/>
        <end position="385"/>
    </location>
</feature>
<feature type="zinc finger region" description="C6H2-type" evidence="2">
    <location>
        <begin position="6"/>
        <end position="59"/>
    </location>
</feature>
<feature type="binding site" evidence="1">
    <location>
        <position position="9"/>
    </location>
    <ligand>
        <name>Zn(2+)</name>
        <dbReference type="ChEBI" id="CHEBI:29105"/>
        <label>1</label>
    </ligand>
</feature>
<feature type="binding site" evidence="1">
    <location>
        <position position="14"/>
    </location>
    <ligand>
        <name>Zn(2+)</name>
        <dbReference type="ChEBI" id="CHEBI:29105"/>
        <label>1</label>
    </ligand>
</feature>
<feature type="binding site" evidence="1">
    <location>
        <position position="22"/>
    </location>
    <ligand>
        <name>Zn(2+)</name>
        <dbReference type="ChEBI" id="CHEBI:29105"/>
        <label>2</label>
    </ligand>
</feature>
<feature type="binding site" evidence="1">
    <location>
        <position position="25"/>
    </location>
    <ligand>
        <name>Zn(2+)</name>
        <dbReference type="ChEBI" id="CHEBI:29105"/>
        <label>2</label>
    </ligand>
</feature>
<feature type="binding site" evidence="1">
    <location>
        <position position="36"/>
    </location>
    <ligand>
        <name>Zn(2+)</name>
        <dbReference type="ChEBI" id="CHEBI:29105"/>
        <label>1</label>
    </ligand>
</feature>
<feature type="binding site" evidence="1">
    <location>
        <position position="40"/>
    </location>
    <ligand>
        <name>Zn(2+)</name>
        <dbReference type="ChEBI" id="CHEBI:29105"/>
        <label>1</label>
    </ligand>
</feature>
<feature type="binding site" evidence="1">
    <location>
        <position position="48"/>
    </location>
    <ligand>
        <name>Zn(2+)</name>
        <dbReference type="ChEBI" id="CHEBI:29105"/>
        <label>2</label>
    </ligand>
</feature>
<feature type="binding site" evidence="1">
    <location>
        <position position="52"/>
    </location>
    <ligand>
        <name>Zn(2+)</name>
        <dbReference type="ChEBI" id="CHEBI:29105"/>
        <label>2</label>
    </ligand>
</feature>
<feature type="binding site" evidence="1">
    <location>
        <position position="203"/>
    </location>
    <ligand>
        <name>a protein</name>
        <dbReference type="ChEBI" id="CHEBI:16541"/>
    </ligand>
    <ligandPart>
        <name>N-terminal L-methionine residue</name>
        <dbReference type="ChEBI" id="CHEBI:64731"/>
    </ligandPart>
</feature>
<feature type="binding site" evidence="1">
    <location>
        <position position="220"/>
    </location>
    <ligand>
        <name>Zn(2+)</name>
        <dbReference type="ChEBI" id="CHEBI:29105"/>
        <label>3</label>
    </ligand>
</feature>
<feature type="binding site" evidence="1">
    <location>
        <position position="231"/>
    </location>
    <ligand>
        <name>Zn(2+)</name>
        <dbReference type="ChEBI" id="CHEBI:29105"/>
        <label>3</label>
    </ligand>
</feature>
<feature type="binding site" evidence="1">
    <location>
        <position position="231"/>
    </location>
    <ligand>
        <name>Zn(2+)</name>
        <dbReference type="ChEBI" id="CHEBI:29105"/>
        <label>4</label>
        <note>catalytic</note>
    </ligand>
</feature>
<feature type="binding site" evidence="1">
    <location>
        <position position="294"/>
    </location>
    <ligand>
        <name>Zn(2+)</name>
        <dbReference type="ChEBI" id="CHEBI:29105"/>
        <label>4</label>
        <note>catalytic</note>
    </ligand>
</feature>
<feature type="binding site" evidence="1">
    <location>
        <position position="301"/>
    </location>
    <ligand>
        <name>a protein</name>
        <dbReference type="ChEBI" id="CHEBI:16541"/>
    </ligand>
    <ligandPart>
        <name>N-terminal L-methionine residue</name>
        <dbReference type="ChEBI" id="CHEBI:64731"/>
    </ligandPart>
</feature>
<feature type="binding site" evidence="1">
    <location>
        <position position="327"/>
    </location>
    <ligand>
        <name>Zn(2+)</name>
        <dbReference type="ChEBI" id="CHEBI:29105"/>
        <label>4</label>
        <note>catalytic</note>
    </ligand>
</feature>
<feature type="binding site" evidence="1">
    <location>
        <position position="358"/>
    </location>
    <ligand>
        <name>Zn(2+)</name>
        <dbReference type="ChEBI" id="CHEBI:29105"/>
        <label>3</label>
    </ligand>
</feature>
<feature type="binding site" evidence="1">
    <location>
        <position position="358"/>
    </location>
    <ligand>
        <name>Zn(2+)</name>
        <dbReference type="ChEBI" id="CHEBI:29105"/>
        <label>4</label>
        <note>catalytic</note>
    </ligand>
</feature>
<gene>
    <name type="primary">metap1</name>
</gene>
<protein>
    <recommendedName>
        <fullName evidence="1">Methionine aminopeptidase 1</fullName>
        <shortName evidence="1">MAP 1</shortName>
        <shortName evidence="1">MetAP 1</shortName>
        <ecNumber evidence="1">3.4.11.18</ecNumber>
    </recommendedName>
    <alternativeName>
        <fullName evidence="1">Peptidase M 1</fullName>
    </alternativeName>
</protein>
<evidence type="ECO:0000255" key="1">
    <source>
        <dbReference type="HAMAP-Rule" id="MF_03174"/>
    </source>
</evidence>
<evidence type="ECO:0000255" key="2">
    <source>
        <dbReference type="PROSITE-ProRule" id="PRU01357"/>
    </source>
</evidence>
<evidence type="ECO:0000305" key="3"/>
<accession>Q7ZWV9</accession>
<accession>Q6NRY8</accession>
<proteinExistence type="evidence at transcript level"/>
<organism>
    <name type="scientific">Xenopus laevis</name>
    <name type="common">African clawed frog</name>
    <dbReference type="NCBI Taxonomy" id="8355"/>
    <lineage>
        <taxon>Eukaryota</taxon>
        <taxon>Metazoa</taxon>
        <taxon>Chordata</taxon>
        <taxon>Craniata</taxon>
        <taxon>Vertebrata</taxon>
        <taxon>Euteleostomi</taxon>
        <taxon>Amphibia</taxon>
        <taxon>Batrachia</taxon>
        <taxon>Anura</taxon>
        <taxon>Pipoidea</taxon>
        <taxon>Pipidae</taxon>
        <taxon>Xenopodinae</taxon>
        <taxon>Xenopus</taxon>
        <taxon>Xenopus</taxon>
    </lineage>
</organism>
<comment type="function">
    <text evidence="1">Cotranslationally removes the N-terminal methionine from nascent proteins. The N-terminal methionine is often cleaved when the second residue in the primary sequence is small and uncharged (Met-Ala-, Cys, Gly, Pro, Ser, Thr, or Val).</text>
</comment>
<comment type="catalytic activity">
    <reaction evidence="1">
        <text>Release of N-terminal amino acids, preferentially methionine, from peptides and arylamides.</text>
        <dbReference type="EC" id="3.4.11.18"/>
    </reaction>
</comment>
<comment type="cofactor">
    <cofactor evidence="1">
        <name>Zn(2+)</name>
        <dbReference type="ChEBI" id="CHEBI:29105"/>
    </cofactor>
    <cofactor evidence="1">
        <name>Co(2+)</name>
        <dbReference type="ChEBI" id="CHEBI:48828"/>
    </cofactor>
    <cofactor evidence="1">
        <name>Mn(2+)</name>
        <dbReference type="ChEBI" id="CHEBI:29035"/>
    </cofactor>
    <cofactor evidence="1">
        <name>Fe(2+)</name>
        <dbReference type="ChEBI" id="CHEBI:29033"/>
    </cofactor>
    <text evidence="1">Binds 2 divalent metal cations per subunit. Has a high-affinity and a low affinity metal-binding site. The true nature of the physiological cofactor is under debate. The enzyme is active with zinc, cobalt, manganese or divalent iron ions. Has high activity with zinc; zinc cofactor is transferred into the active site region by the ZNG1 zinc chaperone.</text>
</comment>
<comment type="subunit">
    <text evidence="1">Associates with the 60S ribosomal subunit of the 80S translational complex.</text>
</comment>
<comment type="subcellular location">
    <subcellularLocation>
        <location evidence="1">Cytoplasm</location>
    </subcellularLocation>
</comment>
<comment type="similarity">
    <text evidence="1">Belongs to the peptidase M24A family. Methionine aminopeptidase type 1 subfamily.</text>
</comment>
<comment type="sequence caution" evidence="3">
    <conflict type="erroneous initiation">
        <sequence resource="EMBL-CDS" id="AAH46685"/>
    </conflict>
</comment>
<name>MAP1_XENLA</name>